<gene>
    <name type="primary">GLN2</name>
</gene>
<comment type="catalytic activity">
    <reaction>
        <text>L-glutamate + NH4(+) + ATP = L-glutamine + ADP + phosphate + H(+)</text>
        <dbReference type="Rhea" id="RHEA:16169"/>
        <dbReference type="ChEBI" id="CHEBI:15378"/>
        <dbReference type="ChEBI" id="CHEBI:28938"/>
        <dbReference type="ChEBI" id="CHEBI:29985"/>
        <dbReference type="ChEBI" id="CHEBI:30616"/>
        <dbReference type="ChEBI" id="CHEBI:43474"/>
        <dbReference type="ChEBI" id="CHEBI:58359"/>
        <dbReference type="ChEBI" id="CHEBI:456216"/>
        <dbReference type="EC" id="6.3.1.2"/>
    </reaction>
</comment>
<comment type="subunit">
    <text evidence="1">Homooctamer.</text>
</comment>
<comment type="subcellular location">
    <subcellularLocation>
        <location>Plastid</location>
        <location>Chloroplast</location>
    </subcellularLocation>
</comment>
<comment type="similarity">
    <text evidence="5">Belongs to the glutamine synthetase family.</text>
</comment>
<dbReference type="EC" id="6.3.1.2"/>
<dbReference type="EMBL" id="U46208">
    <property type="protein sequence ID" value="AAB01818.1"/>
    <property type="molecule type" value="mRNA"/>
</dbReference>
<dbReference type="PIR" id="T08090">
    <property type="entry name" value="T08090"/>
</dbReference>
<dbReference type="SMR" id="Q42689"/>
<dbReference type="PaxDb" id="3055-EDP03611"/>
<dbReference type="ProMEX" id="Q42689"/>
<dbReference type="eggNOG" id="KOG0683">
    <property type="taxonomic scope" value="Eukaryota"/>
</dbReference>
<dbReference type="GO" id="GO:0009507">
    <property type="term" value="C:chloroplast"/>
    <property type="evidence" value="ECO:0007669"/>
    <property type="project" value="UniProtKB-SubCell"/>
</dbReference>
<dbReference type="GO" id="GO:0005524">
    <property type="term" value="F:ATP binding"/>
    <property type="evidence" value="ECO:0007669"/>
    <property type="project" value="UniProtKB-KW"/>
</dbReference>
<dbReference type="GO" id="GO:0004356">
    <property type="term" value="F:glutamine synthetase activity"/>
    <property type="evidence" value="ECO:0007669"/>
    <property type="project" value="UniProtKB-EC"/>
</dbReference>
<dbReference type="GO" id="GO:0006542">
    <property type="term" value="P:glutamine biosynthetic process"/>
    <property type="evidence" value="ECO:0007669"/>
    <property type="project" value="InterPro"/>
</dbReference>
<dbReference type="FunFam" id="3.30.590.10:FF:000004">
    <property type="entry name" value="Glutamine synthetase"/>
    <property type="match status" value="1"/>
</dbReference>
<dbReference type="Gene3D" id="3.10.20.70">
    <property type="entry name" value="Glutamine synthetase, N-terminal domain"/>
    <property type="match status" value="1"/>
</dbReference>
<dbReference type="Gene3D" id="3.30.590.10">
    <property type="entry name" value="Glutamine synthetase/guanido kinase, catalytic domain"/>
    <property type="match status" value="1"/>
</dbReference>
<dbReference type="InterPro" id="IPR008147">
    <property type="entry name" value="Gln_synt_N"/>
</dbReference>
<dbReference type="InterPro" id="IPR036651">
    <property type="entry name" value="Gln_synt_N_sf"/>
</dbReference>
<dbReference type="InterPro" id="IPR014746">
    <property type="entry name" value="Gln_synth/guanido_kin_cat_dom"/>
</dbReference>
<dbReference type="InterPro" id="IPR008146">
    <property type="entry name" value="Gln_synth_cat_dom"/>
</dbReference>
<dbReference type="InterPro" id="IPR027303">
    <property type="entry name" value="Gln_synth_gly_rich_site"/>
</dbReference>
<dbReference type="InterPro" id="IPR027302">
    <property type="entry name" value="Gln_synth_N_conserv_site"/>
</dbReference>
<dbReference type="InterPro" id="IPR050292">
    <property type="entry name" value="Glutamine_Synthetase"/>
</dbReference>
<dbReference type="PANTHER" id="PTHR20852">
    <property type="entry name" value="GLUTAMINE SYNTHETASE"/>
    <property type="match status" value="1"/>
</dbReference>
<dbReference type="PANTHER" id="PTHR20852:SF57">
    <property type="entry name" value="GLUTAMINE SYNTHETASE 2 CYTOPLASMIC"/>
    <property type="match status" value="1"/>
</dbReference>
<dbReference type="Pfam" id="PF00120">
    <property type="entry name" value="Gln-synt_C"/>
    <property type="match status" value="1"/>
</dbReference>
<dbReference type="Pfam" id="PF03951">
    <property type="entry name" value="Gln-synt_N"/>
    <property type="match status" value="1"/>
</dbReference>
<dbReference type="SMART" id="SM01230">
    <property type="entry name" value="Gln-synt_C"/>
    <property type="match status" value="1"/>
</dbReference>
<dbReference type="SUPFAM" id="SSF54368">
    <property type="entry name" value="Glutamine synthetase, N-terminal domain"/>
    <property type="match status" value="1"/>
</dbReference>
<dbReference type="SUPFAM" id="SSF55931">
    <property type="entry name" value="Glutamine synthetase/guanido kinase"/>
    <property type="match status" value="1"/>
</dbReference>
<dbReference type="PROSITE" id="PS00180">
    <property type="entry name" value="GLNA_1"/>
    <property type="match status" value="1"/>
</dbReference>
<dbReference type="PROSITE" id="PS00181">
    <property type="entry name" value="GLNA_ATP"/>
    <property type="match status" value="1"/>
</dbReference>
<dbReference type="PROSITE" id="PS51986">
    <property type="entry name" value="GS_BETA_GRASP"/>
    <property type="match status" value="1"/>
</dbReference>
<dbReference type="PROSITE" id="PS51987">
    <property type="entry name" value="GS_CATALYTIC"/>
    <property type="match status" value="1"/>
</dbReference>
<feature type="transit peptide" description="Chloroplast" evidence="2">
    <location>
        <begin position="1"/>
        <end status="unknown"/>
    </location>
</feature>
<feature type="chain" id="PRO_0000011176" description="Glutamine synthetase, chloroplastic">
    <location>
        <begin status="unknown"/>
        <end position="380"/>
    </location>
</feature>
<feature type="domain" description="GS beta-grasp" evidence="3">
    <location>
        <begin position="35"/>
        <end position="125"/>
    </location>
</feature>
<feature type="domain" description="GS catalytic" evidence="4">
    <location>
        <begin position="132"/>
        <end position="380"/>
    </location>
</feature>
<organism>
    <name type="scientific">Chlamydomonas reinhardtii</name>
    <name type="common">Chlamydomonas smithii</name>
    <dbReference type="NCBI Taxonomy" id="3055"/>
    <lineage>
        <taxon>Eukaryota</taxon>
        <taxon>Viridiplantae</taxon>
        <taxon>Chlorophyta</taxon>
        <taxon>core chlorophytes</taxon>
        <taxon>Chlorophyceae</taxon>
        <taxon>CS clade</taxon>
        <taxon>Chlamydomonadales</taxon>
        <taxon>Chlamydomonadaceae</taxon>
        <taxon>Chlamydomonas</taxon>
    </lineage>
</organism>
<keyword id="KW-0067">ATP-binding</keyword>
<keyword id="KW-0150">Chloroplast</keyword>
<keyword id="KW-0436">Ligase</keyword>
<keyword id="KW-0547">Nucleotide-binding</keyword>
<keyword id="KW-0934">Plastid</keyword>
<keyword id="KW-0809">Transit peptide</keyword>
<protein>
    <recommendedName>
        <fullName>Glutamine synthetase, chloroplastic</fullName>
        <ecNumber>6.3.1.2</ecNumber>
    </recommendedName>
    <alternativeName>
        <fullName>GS2</fullName>
    </alternativeName>
    <alternativeName>
        <fullName>Glutamate--ammonia ligase</fullName>
    </alternativeName>
</protein>
<accession>Q42689</accession>
<reference key="1">
    <citation type="journal article" date="1996" name="Plant Physiol.">
        <title>Isolation and characterization of glutamine synthetase genes in Chlamydomonas reinhardtii.</title>
        <authorList>
            <person name="Chen Q."/>
            <person name="Silflow C.D."/>
        </authorList>
    </citation>
    <scope>NUCLEOTIDE SEQUENCE [MRNA]</scope>
    <source>
        <strain>A55</strain>
    </source>
</reference>
<evidence type="ECO:0000250" key="1"/>
<evidence type="ECO:0000255" key="2"/>
<evidence type="ECO:0000255" key="3">
    <source>
        <dbReference type="PROSITE-ProRule" id="PRU01330"/>
    </source>
</evidence>
<evidence type="ECO:0000255" key="4">
    <source>
        <dbReference type="PROSITE-ProRule" id="PRU01331"/>
    </source>
</evidence>
<evidence type="ECO:0000305" key="5"/>
<proteinExistence type="evidence at transcript level"/>
<sequence length="380" mass="41285">MAFALRGVTAKASGRTAGARSSGRTLTVRVQAYGMAAEYIWADGNEGKPEKGMIFNEMRSKTKCFEAPLGLDASEYPDWSFDGSSTGQAEGNNSDCILRPVRVVTDPIRGAPHVLVMCEVFAPDGKPHSTNTRAKLREIIDDKVTAEDCWYGFEQEYTMLAKTSGHIYGWPAGGFPAPQGPFYCGVGAESAFGRPLAEAHMEACMKAGLVISGINAEVMPGQWEYQIGPVGPLALGDEVMLSRWLLHRLGEDFGIVSTFNPKPVRTGDWNGTGAHTNFSTKGMRVPGGMKVIEEAVEKLSKTHIEHITQYGIGNEARLTGKHETCDINTFKHGVADRGSSIRIPLPVMLKGYGYLEDRRPAANVDPYTVARLLIKTVLKG</sequence>
<name>GLNA2_CHLRE</name>